<evidence type="ECO:0000255" key="1"/>
<evidence type="ECO:0000269" key="2">
    <source>
    </source>
</evidence>
<evidence type="ECO:0000269" key="3">
    <source>
    </source>
</evidence>
<evidence type="ECO:0000269" key="4">
    <source>
    </source>
</evidence>
<evidence type="ECO:0000269" key="5">
    <source>
    </source>
</evidence>
<evidence type="ECO:0000269" key="6">
    <source>
    </source>
</evidence>
<evidence type="ECO:0000303" key="7">
    <source ref="5"/>
</evidence>
<evidence type="ECO:0000305" key="8"/>
<comment type="function">
    <text evidence="4 5 6">Aldehyde decarbonylase involved in the conversion of aldehydes to alkanes. Core component of a very-long-chain alkane synthesis complex. Involved in epicuticular wax biosynthesis and pollen fertility.</text>
</comment>
<comment type="catalytic activity">
    <reaction evidence="4 5">
        <text>a long-chain fatty aldehyde + 2 NADPH + O2 + H(+) = a long-chain alkane + formate + 2 NADP(+) + H2O</text>
        <dbReference type="Rhea" id="RHEA:21440"/>
        <dbReference type="ChEBI" id="CHEBI:15377"/>
        <dbReference type="ChEBI" id="CHEBI:15378"/>
        <dbReference type="ChEBI" id="CHEBI:15379"/>
        <dbReference type="ChEBI" id="CHEBI:15740"/>
        <dbReference type="ChEBI" id="CHEBI:17176"/>
        <dbReference type="ChEBI" id="CHEBI:57783"/>
        <dbReference type="ChEBI" id="CHEBI:58349"/>
        <dbReference type="ChEBI" id="CHEBI:83563"/>
        <dbReference type="EC" id="4.1.99.5"/>
    </reaction>
</comment>
<comment type="subunit">
    <text evidence="5">Homodimer. Interacts with CER3, CYTB5-B, CYTB5-C, CYTB5-D and CYTB5-E.</text>
</comment>
<comment type="subcellular location">
    <subcellularLocation>
        <location evidence="3 5">Endoplasmic reticulum membrane</location>
        <topology evidence="3 5">Multi-pass membrane protein</topology>
    </subcellularLocation>
</comment>
<comment type="alternative products">
    <event type="alternative splicing"/>
    <isoform>
        <id>F4HVY0-1</id>
        <name>1</name>
        <sequence type="displayed"/>
    </isoform>
    <isoform>
        <id>F4HVY0-2</id>
        <name>2</name>
        <sequence type="described" ref="VSP_044264"/>
    </isoform>
    <isoform>
        <id>F4HVY0-3</id>
        <name>3</name>
        <sequence type="described" ref="VSP_044263"/>
    </isoform>
</comment>
<comment type="tissue specificity">
    <text evidence="4 6">Expressed in seedlings, stems, leaves, flowers, fruits and siliques. Not detected in roots, pollen and seeds. Expressed in trichomes, cotyledons, shoot apical meristem and leaf primordia. Preferentially associated with young leaves rather than mature leaves. Expressed in the epidermis of the stem and caulines leaves, in the carpels and the sepals.</text>
</comment>
<comment type="induction">
    <text evidence="2 4">Down regulated by cold and dark stresses. Up-regulated by low humidity, osmotic stress and abscisic acid treatment. No effet of methyl jasmonate, GA3, salicylic acid, cytokinin or auxin treatments.</text>
</comment>
<comment type="disruption phenotype">
    <text evidence="4 6">Glossy stem and fruit and reduced fertility due to the inability of the pollen grains to rehydrate on the stigma surface. Disappearance of the wax crystals. Decreased C29, C31 and C33 alkane contents. Increased susceptibility to soil water deficit.</text>
</comment>
<comment type="similarity">
    <text evidence="8">Belongs to the sterol desaturase family.</text>
</comment>
<comment type="sequence caution" evidence="8">
    <conflict type="erroneous gene model prediction">
        <sequence resource="EMBL-CDS" id="AAC24374"/>
    </conflict>
</comment>
<comment type="sequence caution" evidence="8">
    <conflict type="erroneous termination">
        <sequence resource="EMBL-CDS" id="BAA11024"/>
    </conflict>
    <text>Truncated C-terminus.</text>
</comment>
<comment type="sequence caution" evidence="8">
    <conflict type="frameshift">
        <sequence resource="EMBL-CDS" id="BAA11024"/>
    </conflict>
</comment>
<sequence length="625" mass="72406">MATKPGVLTDWPWTPLGSFKYIVIAPWAVHSTYRFVTDDPEKRDLGYFLVFPFLLFRILHNQVWISLSRYYTSSGKRRIVDKGIDFNQVDRETNWDDQILFNGVLFYIGINLLPEAKQLPWWRTDGVLMAALIHTGPVEFLYYWLHKALHHHFLYSRYHSHHHSSIVTEPITSVIHPFAEHIAYFILFAIPLLTTLLTKTASIISFAGYIIYIDFMNNMGHCNFELIPKRLFHLFPPLKFLCYTPSYHSLHHTQFRTNYSLFMPLYDYIYGTMDESTDTLYEKTLERGDDIVDVVHLTHLTTPESIYHLRIGLASFASYPFAYRWFMRLLWPFTSLSMIFTLFYARLFVAERNSFNKLNLQSWVIPRYNLQYLLKWRKEAINNMIEKAILEADKKGVKVLSLGLMNQGEELNRNGEVYIHNHPDMKVRLVDGSRLAAAVVINSVPKATTSVVMTGNLTKVAYTIASALCQRGVQVSTLRLDEYEKIRSCVPQECRDHLVYLTSEALSSNKVWLVGEGTTREEQEKATKGTLFIPFSQFPLKQLRRDCIYHTTPALIVPKSLVNVHSCENWLPRKAMSATRVAGILHALEGWEMHECGTSLLLSDLDQVWEACLSHGFQPLLLPHH</sequence>
<organism>
    <name type="scientific">Arabidopsis thaliana</name>
    <name type="common">Mouse-ear cress</name>
    <dbReference type="NCBI Taxonomy" id="3702"/>
    <lineage>
        <taxon>Eukaryota</taxon>
        <taxon>Viridiplantae</taxon>
        <taxon>Streptophyta</taxon>
        <taxon>Embryophyta</taxon>
        <taxon>Tracheophyta</taxon>
        <taxon>Spermatophyta</taxon>
        <taxon>Magnoliopsida</taxon>
        <taxon>eudicotyledons</taxon>
        <taxon>Gunneridae</taxon>
        <taxon>Pentapetalae</taxon>
        <taxon>rosids</taxon>
        <taxon>malvids</taxon>
        <taxon>Brassicales</taxon>
        <taxon>Brassicaceae</taxon>
        <taxon>Camelineae</taxon>
        <taxon>Arabidopsis</taxon>
    </lineage>
</organism>
<reference key="1">
    <citation type="journal article" date="1995" name="Plant Cell">
        <title>Molecular characterization of the CER1 gene of arabidopsis involved in epicuticular wax biosynthesis and pollen fertility.</title>
        <authorList>
            <person name="Aarts M.G."/>
            <person name="Keijzer C.J."/>
            <person name="Stiekema W.J."/>
            <person name="Pereira A."/>
        </authorList>
    </citation>
    <scope>NUCLEOTIDE SEQUENCE [MRNA] (ISOFORM 1)</scope>
    <scope>FUNCTION</scope>
    <scope>DISRUPTION PHENOTYPE</scope>
    <scope>TISSUE SPECIFICITY</scope>
    <source>
        <strain>cv. Landsberg erecta</strain>
    </source>
</reference>
<reference key="2">
    <citation type="journal article" date="1997" name="Plant Physiol.">
        <title>The glossy1 locus of maize and an epidermis-specific cDNA from Kleinia odora define a class of receptor-like proteins required for the normal accumulation of cuticular waxes.</title>
        <authorList>
            <person name="Hansen J.D."/>
            <person name="Pyee J."/>
            <person name="Xia Y."/>
            <person name="Wen T.-J."/>
            <person name="Robertson D.S."/>
            <person name="Kolattukudy P.E."/>
            <person name="Nikolau B.J."/>
            <person name="Schnable P.S."/>
        </authorList>
    </citation>
    <scope>NUCLEOTIDE SEQUENCE [MRNA] (ISOFORM 1)</scope>
    <source>
        <strain>cv. Landsberg erecta</strain>
    </source>
</reference>
<reference key="3">
    <citation type="journal article" date="2000" name="Nature">
        <title>Sequence and analysis of chromosome 1 of the plant Arabidopsis thaliana.</title>
        <authorList>
            <person name="Theologis A."/>
            <person name="Ecker J.R."/>
            <person name="Palm C.J."/>
            <person name="Federspiel N.A."/>
            <person name="Kaul S."/>
            <person name="White O."/>
            <person name="Alonso J."/>
            <person name="Altafi H."/>
            <person name="Araujo R."/>
            <person name="Bowman C.L."/>
            <person name="Brooks S.Y."/>
            <person name="Buehler E."/>
            <person name="Chan A."/>
            <person name="Chao Q."/>
            <person name="Chen H."/>
            <person name="Cheuk R.F."/>
            <person name="Chin C.W."/>
            <person name="Chung M.K."/>
            <person name="Conn L."/>
            <person name="Conway A.B."/>
            <person name="Conway A.R."/>
            <person name="Creasy T.H."/>
            <person name="Dewar K."/>
            <person name="Dunn P."/>
            <person name="Etgu P."/>
            <person name="Feldblyum T.V."/>
            <person name="Feng J.-D."/>
            <person name="Fong B."/>
            <person name="Fujii C.Y."/>
            <person name="Gill J.E."/>
            <person name="Goldsmith A.D."/>
            <person name="Haas B."/>
            <person name="Hansen N.F."/>
            <person name="Hughes B."/>
            <person name="Huizar L."/>
            <person name="Hunter J.L."/>
            <person name="Jenkins J."/>
            <person name="Johnson-Hopson C."/>
            <person name="Khan S."/>
            <person name="Khaykin E."/>
            <person name="Kim C.J."/>
            <person name="Koo H.L."/>
            <person name="Kremenetskaia I."/>
            <person name="Kurtz D.B."/>
            <person name="Kwan A."/>
            <person name="Lam B."/>
            <person name="Langin-Hooper S."/>
            <person name="Lee A."/>
            <person name="Lee J.M."/>
            <person name="Lenz C.A."/>
            <person name="Li J.H."/>
            <person name="Li Y.-P."/>
            <person name="Lin X."/>
            <person name="Liu S.X."/>
            <person name="Liu Z.A."/>
            <person name="Luros J.S."/>
            <person name="Maiti R."/>
            <person name="Marziali A."/>
            <person name="Militscher J."/>
            <person name="Miranda M."/>
            <person name="Nguyen M."/>
            <person name="Nierman W.C."/>
            <person name="Osborne B.I."/>
            <person name="Pai G."/>
            <person name="Peterson J."/>
            <person name="Pham P.K."/>
            <person name="Rizzo M."/>
            <person name="Rooney T."/>
            <person name="Rowley D."/>
            <person name="Sakano H."/>
            <person name="Salzberg S.L."/>
            <person name="Schwartz J.R."/>
            <person name="Shinn P."/>
            <person name="Southwick A.M."/>
            <person name="Sun H."/>
            <person name="Tallon L.J."/>
            <person name="Tambunga G."/>
            <person name="Toriumi M.J."/>
            <person name="Town C.D."/>
            <person name="Utterback T."/>
            <person name="Van Aken S."/>
            <person name="Vaysberg M."/>
            <person name="Vysotskaia V.S."/>
            <person name="Walker M."/>
            <person name="Wu D."/>
            <person name="Yu G."/>
            <person name="Fraser C.M."/>
            <person name="Venter J.C."/>
            <person name="Davis R.W."/>
        </authorList>
    </citation>
    <scope>NUCLEOTIDE SEQUENCE [LARGE SCALE GENOMIC DNA]</scope>
    <source>
        <strain>cv. Columbia</strain>
    </source>
</reference>
<reference key="4">
    <citation type="journal article" date="2017" name="Plant J.">
        <title>Araport11: a complete reannotation of the Arabidopsis thaliana reference genome.</title>
        <authorList>
            <person name="Cheng C.Y."/>
            <person name="Krishnakumar V."/>
            <person name="Chan A.P."/>
            <person name="Thibaud-Nissen F."/>
            <person name="Schobel S."/>
            <person name="Town C.D."/>
        </authorList>
    </citation>
    <scope>GENOME REANNOTATION</scope>
    <source>
        <strain>cv. Columbia</strain>
    </source>
</reference>
<reference key="5">
    <citation type="submission" date="2006-07" db="EMBL/GenBank/DDBJ databases">
        <title>Large-scale analysis of RIKEN Arabidopsis full-length (RAFL) cDNAs.</title>
        <authorList>
            <person name="Totoki Y."/>
            <person name="Seki M."/>
            <person name="Ishida J."/>
            <person name="Nakajima M."/>
            <person name="Enju A."/>
            <person name="Kamiya A."/>
            <person name="Narusaka M."/>
            <person name="Shin-i T."/>
            <person name="Nakagawa M."/>
            <person name="Sakamoto N."/>
            <person name="Oishi K."/>
            <person name="Kohara Y."/>
            <person name="Kobayashi M."/>
            <person name="Toyoda A."/>
            <person name="Sakaki Y."/>
            <person name="Sakurai T."/>
            <person name="Iida K."/>
            <person name="Akiyama K."/>
            <person name="Satou M."/>
            <person name="Toyoda T."/>
            <person name="Konagaya A."/>
            <person name="Carninci P."/>
            <person name="Kawai J."/>
            <person name="Hayashizaki Y."/>
            <person name="Shinozaki K."/>
        </authorList>
    </citation>
    <scope>NUCLEOTIDE SEQUENCE [LARGE SCALE MRNA] (ISOFORM 3)</scope>
    <source>
        <strain>cv. Columbia</strain>
    </source>
</reference>
<reference key="6">
    <citation type="journal article" date="2009" name="Plant Cell Physiol.">
        <title>Suppression of peroxisome biogenesis factor 10 reduces cuticular wax accumulation by disrupting the ER network in Arabidopsis thaliana.</title>
        <authorList>
            <person name="Kamigaki A."/>
            <person name="Kondo M."/>
            <person name="Mano S."/>
            <person name="Hayashi M."/>
            <person name="Nishimura M."/>
        </authorList>
    </citation>
    <scope>SUBCELLULAR LOCATION</scope>
</reference>
<reference key="7">
    <citation type="journal article" date="2009" name="Plant Physiol.">
        <title>The impact of water deficiency on leaf cuticle lipids of Arabidopsis.</title>
        <authorList>
            <person name="Kosma D.K."/>
            <person name="Bourdenx B."/>
            <person name="Bernard A."/>
            <person name="Parsons E.P."/>
            <person name="Lue S."/>
            <person name="Joubes J."/>
            <person name="Jenks M.A."/>
        </authorList>
    </citation>
    <scope>INDUCTION BY ABIOTIC STRESSES</scope>
</reference>
<reference key="8">
    <citation type="journal article" date="2011" name="Plant Physiol.">
        <title>Overexpression of Arabidopsis ECERIFERUM1 promotes wax very-long-chain alkane biosynthesis and influences plant response to biotic and abiotic stresses.</title>
        <authorList>
            <person name="Bourdenx B."/>
            <person name="Bernard A."/>
            <person name="Domergue F."/>
            <person name="Pascal S."/>
            <person name="Leger A."/>
            <person name="Roby D."/>
            <person name="Pervent M."/>
            <person name="Vile D."/>
            <person name="Haslam R.P."/>
            <person name="Napier J.A."/>
            <person name="Lessire R."/>
            <person name="Joubes J."/>
        </authorList>
    </citation>
    <scope>FUNCTION</scope>
    <scope>TISSUE SPECIFICITY</scope>
    <scope>DISRUPTION PHENOTYPE</scope>
    <scope>INDUCTION</scope>
</reference>
<reference key="9">
    <citation type="journal article" date="2012" name="Plant Cell">
        <title>Reconstitution of plant alkane biosynthesis in yeast demonstrates that Arabidopsis ECERIFERUM1 and ECERIFERUM3 are core components of a very-long-chain alkane synthesis complex.</title>
        <authorList>
            <person name="Bernard A."/>
            <person name="Domergue F."/>
            <person name="Pascal S."/>
            <person name="Jetter R."/>
            <person name="Renne C."/>
            <person name="Faure J.D."/>
            <person name="Haslam R.P."/>
            <person name="Napier J.A."/>
            <person name="Lessire R."/>
            <person name="Joubes J."/>
        </authorList>
    </citation>
    <scope>FUNCTION</scope>
    <scope>SUBUNIT</scope>
    <scope>INTERACTION WITH CER3; CYTB5-B; CYTB5-C; CYTB5-D AND CYTB5-E</scope>
    <scope>SUBCELLULAR LOCATION</scope>
    <scope>MUTAGENESIS OF HIS-146; HIS-159 AND HIS-248</scope>
    <source>
        <strain>cv. Columbia</strain>
    </source>
</reference>
<feature type="chain" id="PRO_0000419614" description="Very-long-chain aldehyde decarbonylase CER1">
    <location>
        <begin position="1"/>
        <end position="625"/>
    </location>
</feature>
<feature type="transmembrane region" description="Helical" evidence="1">
    <location>
        <begin position="45"/>
        <end position="65"/>
    </location>
</feature>
<feature type="transmembrane region" description="Helical" evidence="1">
    <location>
        <begin position="126"/>
        <end position="146"/>
    </location>
</feature>
<feature type="transmembrane region" description="Helical" evidence="1">
    <location>
        <begin position="177"/>
        <end position="197"/>
    </location>
</feature>
<feature type="transmembrane region" description="Helical" evidence="1">
    <location>
        <begin position="200"/>
        <end position="220"/>
    </location>
</feature>
<feature type="transmembrane region" description="Helical" evidence="1">
    <location>
        <begin position="329"/>
        <end position="349"/>
    </location>
</feature>
<feature type="domain" description="Fatty acid hydroxylase" evidence="1">
    <location>
        <begin position="138"/>
        <end position="272"/>
    </location>
</feature>
<feature type="splice variant" id="VSP_044263" description="In isoform 3." evidence="7">
    <original>MATKPGVLTDWPWTPLGSFKYIVIAPWAVHSTYRFVTDDPEKRDLGYFLVFPFLLFRILHNQVWISLSRYYTSSGKRRIVDKGIDFNQVDRETNWDDQILFNGVLFYIGINLLPEAKQLPWWRTDGVLMAALIHTGPVEFLYYWLHKALHHHFLYSRYHSHHHSSIVTEPITS</original>
    <variation>MGFDQMYAA</variation>
    <location>
        <begin position="1"/>
        <end position="173"/>
    </location>
</feature>
<feature type="splice variant" id="VSP_044264" description="In isoform 2." evidence="8">
    <original>N</original>
    <variation>NKGFWV</variation>
    <location>
        <position position="509"/>
    </location>
</feature>
<feature type="mutagenesis site" description="Loss of activity." evidence="5">
    <original>H</original>
    <variation>A</variation>
    <location>
        <position position="146"/>
    </location>
</feature>
<feature type="mutagenesis site" description="Loss of activity." evidence="5">
    <original>H</original>
    <variation>A</variation>
    <location>
        <position position="159"/>
    </location>
</feature>
<feature type="mutagenesis site" description="Loss of activity." evidence="5">
    <original>H</original>
    <variation>A</variation>
    <location>
        <position position="248"/>
    </location>
</feature>
<feature type="sequence conflict" description="In Ref. 2; AAB87721." evidence="8" ref="2">
    <original>PEA</original>
    <variation>AEG</variation>
    <location>
        <begin position="114"/>
        <end position="116"/>
    </location>
</feature>
<feature type="sequence conflict" description="In Ref. 2; AAB87721." evidence="8" ref="2">
    <original>A</original>
    <variation>G</variation>
    <location>
        <position position="130"/>
    </location>
</feature>
<feature type="sequence conflict" description="In Ref. 2; AAB87721." evidence="8" ref="2">
    <original>L</original>
    <variation>V</variation>
    <location>
        <position position="145"/>
    </location>
</feature>
<feature type="sequence conflict" description="In Ref. 2; AAB87721." evidence="8" ref="2">
    <original>L</original>
    <variation>V</variation>
    <location>
        <position position="197"/>
    </location>
</feature>
<feature type="sequence conflict" description="In Ref. 1; BAA11024 and 2; AAB87721." evidence="8" ref="1 2">
    <original>I</original>
    <variation>R</variation>
    <location>
        <position position="291"/>
    </location>
</feature>
<feature type="sequence conflict" description="In Ref. 2; AAB87721." evidence="8" ref="2">
    <original>A</original>
    <variation>P</variation>
    <location>
        <position position="314"/>
    </location>
</feature>
<feature type="sequence conflict" description="In Ref. 1; BAA11024 and 2; AAB87721." evidence="8" ref="1 2">
    <original>R</original>
    <variation>S</variation>
    <location>
        <position position="545"/>
    </location>
</feature>
<feature type="sequence conflict" description="In Ref. 1; BAA11024." evidence="8" ref="1">
    <original>N</original>
    <variation>D</variation>
    <location>
        <position position="563"/>
    </location>
</feature>
<feature type="sequence conflict" description="In Ref. 1; BAA11024 and 2; AAB87721." evidence="8" ref="1 2">
    <original>M</original>
    <variation>T</variation>
    <location>
        <position position="593"/>
    </location>
</feature>
<feature type="sequence conflict" description="In Ref. 1; BAA11024 and 2; AAB87721." evidence="8" ref="1 2">
    <original>Q</original>
    <variation>K</variation>
    <location>
        <position position="607"/>
    </location>
</feature>
<feature type="sequence conflict" description="In Ref. 1; BAA11024." evidence="8" ref="1">
    <original>H</original>
    <variation>R</variation>
    <location>
        <position position="615"/>
    </location>
</feature>
<protein>
    <recommendedName>
        <fullName evidence="8">Very-long-chain aldehyde decarbonylase CER1</fullName>
        <ecNumber evidence="4 5">4.1.99.5</ecNumber>
    </recommendedName>
    <alternativeName>
        <fullName>Protein ECERIFERUM 1</fullName>
    </alternativeName>
</protein>
<name>CER1_ARATH</name>
<dbReference type="EC" id="4.1.99.5" evidence="4 5"/>
<dbReference type="EMBL" id="D64155">
    <property type="protein sequence ID" value="BAA11024.1"/>
    <property type="status" value="ALT_SEQ"/>
    <property type="molecule type" value="mRNA"/>
</dbReference>
<dbReference type="EMBL" id="U40489">
    <property type="protein sequence ID" value="AAB87721.1"/>
    <property type="molecule type" value="mRNA"/>
</dbReference>
<dbReference type="EMBL" id="U89959">
    <property type="protein sequence ID" value="AAC24374.1"/>
    <property type="status" value="ALT_SEQ"/>
    <property type="molecule type" value="Genomic_DNA"/>
</dbReference>
<dbReference type="EMBL" id="CP002684">
    <property type="protein sequence ID" value="AEE27400.1"/>
    <property type="molecule type" value="Genomic_DNA"/>
</dbReference>
<dbReference type="EMBL" id="CP002684">
    <property type="protein sequence ID" value="AEE27401.1"/>
    <property type="molecule type" value="Genomic_DNA"/>
</dbReference>
<dbReference type="EMBL" id="CP002684">
    <property type="protein sequence ID" value="AEE27402.1"/>
    <property type="molecule type" value="Genomic_DNA"/>
</dbReference>
<dbReference type="EMBL" id="AK226895">
    <property type="protein sequence ID" value="BAE98972.1"/>
    <property type="molecule type" value="mRNA"/>
</dbReference>
<dbReference type="RefSeq" id="NP_001184890.1">
    <molecule id="F4HVY0-2"/>
    <property type="nucleotide sequence ID" value="NM_001197961.1"/>
</dbReference>
<dbReference type="RefSeq" id="NP_171723.2">
    <molecule id="F4HVY0-1"/>
    <property type="nucleotide sequence ID" value="NM_100101.4"/>
</dbReference>
<dbReference type="RefSeq" id="NP_850932.2">
    <molecule id="F4HVY0-3"/>
    <property type="nucleotide sequence ID" value="NM_180601.2"/>
</dbReference>
<dbReference type="BioGRID" id="22842">
    <property type="interactions" value="7"/>
</dbReference>
<dbReference type="FunCoup" id="F4HVY0">
    <property type="interactions" value="163"/>
</dbReference>
<dbReference type="STRING" id="3702.F4HVY0"/>
<dbReference type="PaxDb" id="3702-AT1G02205.3"/>
<dbReference type="ProteomicsDB" id="224474">
    <molecule id="F4HVY0-1"/>
</dbReference>
<dbReference type="EnsemblPlants" id="AT1G02205.1">
    <molecule id="F4HVY0-3"/>
    <property type="protein sequence ID" value="AT1G02205.1"/>
    <property type="gene ID" value="AT1G02205"/>
</dbReference>
<dbReference type="EnsemblPlants" id="AT1G02205.2">
    <molecule id="F4HVY0-1"/>
    <property type="protein sequence ID" value="AT1G02205.2"/>
    <property type="gene ID" value="AT1G02205"/>
</dbReference>
<dbReference type="EnsemblPlants" id="AT1G02205.3">
    <molecule id="F4HVY0-2"/>
    <property type="protein sequence ID" value="AT1G02205.3"/>
    <property type="gene ID" value="AT1G02205"/>
</dbReference>
<dbReference type="GeneID" id="837602"/>
<dbReference type="Gramene" id="AT1G02205.1">
    <molecule id="F4HVY0-3"/>
    <property type="protein sequence ID" value="AT1G02205.1"/>
    <property type="gene ID" value="AT1G02205"/>
</dbReference>
<dbReference type="Gramene" id="AT1G02205.2">
    <molecule id="F4HVY0-1"/>
    <property type="protein sequence ID" value="AT1G02205.2"/>
    <property type="gene ID" value="AT1G02205"/>
</dbReference>
<dbReference type="Gramene" id="AT1G02205.3">
    <molecule id="F4HVY0-2"/>
    <property type="protein sequence ID" value="AT1G02205.3"/>
    <property type="gene ID" value="AT1G02205"/>
</dbReference>
<dbReference type="KEGG" id="ath:AT1G02205"/>
<dbReference type="Araport" id="AT1G02205"/>
<dbReference type="TAIR" id="AT1G02205">
    <property type="gene designation" value="CER1"/>
</dbReference>
<dbReference type="eggNOG" id="ENOG502QR3T">
    <property type="taxonomic scope" value="Eukaryota"/>
</dbReference>
<dbReference type="InParanoid" id="F4HVY0"/>
<dbReference type="OMA" id="WSMVLTR"/>
<dbReference type="PhylomeDB" id="F4HVY0"/>
<dbReference type="BioCyc" id="MetaCyc:AT1G02205-MONOMER"/>
<dbReference type="PRO" id="PR:F4HVY0"/>
<dbReference type="Proteomes" id="UP000006548">
    <property type="component" value="Chromosome 1"/>
</dbReference>
<dbReference type="ExpressionAtlas" id="F4HVY0">
    <property type="expression patterns" value="baseline and differential"/>
</dbReference>
<dbReference type="GO" id="GO:0005789">
    <property type="term" value="C:endoplasmic reticulum membrane"/>
    <property type="evidence" value="ECO:0007669"/>
    <property type="project" value="UniProtKB-SubCell"/>
</dbReference>
<dbReference type="GO" id="GO:0071771">
    <property type="term" value="F:aldehyde oxygenase (deformylating) activity"/>
    <property type="evidence" value="ECO:0007669"/>
    <property type="project" value="UniProtKB-EC"/>
</dbReference>
<dbReference type="GO" id="GO:0005506">
    <property type="term" value="F:iron ion binding"/>
    <property type="evidence" value="ECO:0007669"/>
    <property type="project" value="InterPro"/>
</dbReference>
<dbReference type="GO" id="GO:0016491">
    <property type="term" value="F:oxidoreductase activity"/>
    <property type="evidence" value="ECO:0007669"/>
    <property type="project" value="InterPro"/>
</dbReference>
<dbReference type="GO" id="GO:0043447">
    <property type="term" value="P:alkane biosynthetic process"/>
    <property type="evidence" value="ECO:0000314"/>
    <property type="project" value="TAIR"/>
</dbReference>
<dbReference type="GO" id="GO:0042742">
    <property type="term" value="P:defense response to bacterium"/>
    <property type="evidence" value="ECO:0000315"/>
    <property type="project" value="TAIR"/>
</dbReference>
<dbReference type="GO" id="GO:0050832">
    <property type="term" value="P:defense response to fungus"/>
    <property type="evidence" value="ECO:0000315"/>
    <property type="project" value="TAIR"/>
</dbReference>
<dbReference type="GO" id="GO:0009414">
    <property type="term" value="P:response to water deprivation"/>
    <property type="evidence" value="ECO:0000315"/>
    <property type="project" value="TAIR"/>
</dbReference>
<dbReference type="GO" id="GO:0010025">
    <property type="term" value="P:wax biosynthetic process"/>
    <property type="evidence" value="ECO:0000315"/>
    <property type="project" value="TAIR"/>
</dbReference>
<dbReference type="InterPro" id="IPR021940">
    <property type="entry name" value="CER1-like_C"/>
</dbReference>
<dbReference type="InterPro" id="IPR006694">
    <property type="entry name" value="Fatty_acid_hydroxylase"/>
</dbReference>
<dbReference type="InterPro" id="IPR050307">
    <property type="entry name" value="Sterol_Desaturase_Related"/>
</dbReference>
<dbReference type="PANTHER" id="PTHR11863">
    <property type="entry name" value="STEROL DESATURASE"/>
    <property type="match status" value="1"/>
</dbReference>
<dbReference type="Pfam" id="PF12076">
    <property type="entry name" value="CER1-like_C"/>
    <property type="match status" value="1"/>
</dbReference>
<dbReference type="Pfam" id="PF04116">
    <property type="entry name" value="FA_hydroxylase"/>
    <property type="match status" value="1"/>
</dbReference>
<gene>
    <name type="primary">CER1</name>
    <name type="ordered locus">At1g02205</name>
    <name type="ORF">T7I23.10</name>
</gene>
<proteinExistence type="evidence at protein level"/>
<accession>F4HVY0</accession>
<accession>F4HVX9</accession>
<accession>O22681</accession>
<accession>O23679</accession>
<accession>Q0WV76</accession>
<accession>Q39045</accession>
<keyword id="KW-0025">Alternative splicing</keyword>
<keyword id="KW-0256">Endoplasmic reticulum</keyword>
<keyword id="KW-0456">Lyase</keyword>
<keyword id="KW-0472">Membrane</keyword>
<keyword id="KW-0521">NADP</keyword>
<keyword id="KW-1185">Reference proteome</keyword>
<keyword id="KW-0812">Transmembrane</keyword>
<keyword id="KW-1133">Transmembrane helix</keyword>